<name>CASB_CAPHI</name>
<feature type="signal peptide" evidence="1">
    <location>
        <begin position="1"/>
        <end position="15"/>
    </location>
</feature>
<feature type="chain" id="PRO_0000004473" description="Beta-casein">
    <location>
        <begin position="16"/>
        <end position="222"/>
    </location>
</feature>
<feature type="modified residue" description="Phosphothreonine" evidence="3">
    <location>
        <position position="27"/>
    </location>
</feature>
<feature type="modified residue" description="Phosphoserine" evidence="2">
    <location>
        <position position="30"/>
    </location>
</feature>
<feature type="modified residue" description="Phosphoserine" evidence="2">
    <location>
        <position position="32"/>
    </location>
</feature>
<feature type="modified residue" description="Phosphoserine" evidence="2">
    <location>
        <position position="33"/>
    </location>
</feature>
<feature type="modified residue" description="Phosphoserine" evidence="2">
    <location>
        <position position="34"/>
    </location>
</feature>
<proteinExistence type="evidence at transcript level"/>
<protein>
    <recommendedName>
        <fullName>Beta-casein</fullName>
    </recommendedName>
</protein>
<comment type="function">
    <text>Important role in determination of the surface properties of the casein micelles.</text>
</comment>
<comment type="subcellular location">
    <subcellularLocation>
        <location>Secreted</location>
    </subcellularLocation>
</comment>
<comment type="tissue specificity">
    <text>Mammary gland specific. Secreted in milk.</text>
</comment>
<comment type="similarity">
    <text evidence="4">Belongs to the beta-casein family.</text>
</comment>
<dbReference type="EMBL" id="M90561">
    <property type="protein sequence ID" value="AAA30906.1"/>
    <property type="molecule type" value="Genomic_DNA"/>
</dbReference>
<dbReference type="EMBL" id="M90556">
    <property type="protein sequence ID" value="AAA30906.1"/>
    <property type="status" value="JOINED"/>
    <property type="molecule type" value="Genomic_DNA"/>
</dbReference>
<dbReference type="EMBL" id="M90557">
    <property type="protein sequence ID" value="AAA30906.1"/>
    <property type="status" value="JOINED"/>
    <property type="molecule type" value="Genomic_DNA"/>
</dbReference>
<dbReference type="EMBL" id="M90558">
    <property type="protein sequence ID" value="AAA30906.1"/>
    <property type="status" value="JOINED"/>
    <property type="molecule type" value="Genomic_DNA"/>
</dbReference>
<dbReference type="EMBL" id="M90560">
    <property type="protein sequence ID" value="AAA30906.1"/>
    <property type="status" value="JOINED"/>
    <property type="molecule type" value="Genomic_DNA"/>
</dbReference>
<dbReference type="PIR" id="JC1384">
    <property type="entry name" value="JC1384"/>
</dbReference>
<dbReference type="SMR" id="P33048"/>
<dbReference type="STRING" id="9925.ENSCHIP00000024801"/>
<dbReference type="Allergome" id="1242">
    <property type="allergen name" value="Cap h 8"/>
</dbReference>
<dbReference type="Allergome" id="2968">
    <property type="allergen name" value="Cap h 11"/>
</dbReference>
<dbReference type="iPTMnet" id="P33048"/>
<dbReference type="Ensembl" id="ENSCHIT00020008261">
    <property type="protein sequence ID" value="ENSCHIP00020006325"/>
    <property type="gene ID" value="ENSCHIG00020003941"/>
</dbReference>
<dbReference type="Ensembl" id="ENSCHIT00040015256">
    <property type="protein sequence ID" value="ENSCHIP00040011929"/>
    <property type="gene ID" value="ENSCHIG00040007027"/>
</dbReference>
<dbReference type="Proteomes" id="UP000291000">
    <property type="component" value="Unassembled WGS sequence"/>
</dbReference>
<dbReference type="Proteomes" id="UP000694566">
    <property type="component" value="Unplaced"/>
</dbReference>
<dbReference type="GO" id="GO:0005615">
    <property type="term" value="C:extracellular space"/>
    <property type="evidence" value="ECO:0007669"/>
    <property type="project" value="TreeGrafter"/>
</dbReference>
<dbReference type="InterPro" id="IPR001588">
    <property type="entry name" value="Casein"/>
</dbReference>
<dbReference type="InterPro" id="IPR016345">
    <property type="entry name" value="Casein_beta"/>
</dbReference>
<dbReference type="PANTHER" id="PTHR11500">
    <property type="entry name" value="BETA CASEIN"/>
    <property type="match status" value="1"/>
</dbReference>
<dbReference type="PANTHER" id="PTHR11500:SF0">
    <property type="entry name" value="BETA-CASEIN"/>
    <property type="match status" value="1"/>
</dbReference>
<dbReference type="Pfam" id="PF00363">
    <property type="entry name" value="Casein"/>
    <property type="match status" value="1"/>
</dbReference>
<dbReference type="PIRSF" id="PIRSF002372">
    <property type="entry name" value="Beta-casein"/>
    <property type="match status" value="1"/>
</dbReference>
<organism>
    <name type="scientific">Capra hircus</name>
    <name type="common">Goat</name>
    <dbReference type="NCBI Taxonomy" id="9925"/>
    <lineage>
        <taxon>Eukaryota</taxon>
        <taxon>Metazoa</taxon>
        <taxon>Chordata</taxon>
        <taxon>Craniata</taxon>
        <taxon>Vertebrata</taxon>
        <taxon>Euteleostomi</taxon>
        <taxon>Mammalia</taxon>
        <taxon>Eutheria</taxon>
        <taxon>Laurasiatheria</taxon>
        <taxon>Artiodactyla</taxon>
        <taxon>Ruminantia</taxon>
        <taxon>Pecora</taxon>
        <taxon>Bovidae</taxon>
        <taxon>Caprinae</taxon>
        <taxon>Capra</taxon>
    </lineage>
</organism>
<accession>P33048</accession>
<gene>
    <name type="primary">CSN2</name>
</gene>
<keyword id="KW-0494">Milk protein</keyword>
<keyword id="KW-0597">Phosphoprotein</keyword>
<keyword id="KW-1185">Reference proteome</keyword>
<keyword id="KW-0964">Secreted</keyword>
<keyword id="KW-0732">Signal</keyword>
<evidence type="ECO:0000250" key="1"/>
<evidence type="ECO:0000250" key="2">
    <source>
        <dbReference type="UniProtKB" id="P05814"/>
    </source>
</evidence>
<evidence type="ECO:0000250" key="3">
    <source>
        <dbReference type="UniProtKB" id="Q9GKK3"/>
    </source>
</evidence>
<evidence type="ECO:0000305" key="4"/>
<reference key="1">
    <citation type="journal article" date="1992" name="Gene">
        <title>Cloning of the goat beta-casein-encoding gene and expression in transgenic mice.</title>
        <authorList>
            <person name="Roberts B."/>
            <person name="Ditullio P."/>
            <person name="Vitale J."/>
            <person name="Hehir K."/>
            <person name="Gordon K."/>
        </authorList>
    </citation>
    <scope>NUCLEOTIDE SEQUENCE [GENOMIC DNA]</scope>
    <source>
        <strain>Saanen</strain>
        <tissue>Blood</tissue>
    </source>
</reference>
<sequence>MKVLILACLVALAIAREQEELNVVGETVESLSSSEESITHINKKIEKFQSEEQQQTEDELQDKIHPFAQAQSLVYPFTGPIPNSLPQNILPLTQTPVVVPPFLQPEIMGVPKVKETMVPKHKEMPFPKYPVEPFTESQSLTLTDVEKLHLPLPLVQSWMHQPPQPLSPTVMFPPQSVLSLSQPKVLPVPQKAVPQRDMPIQAFLLYQEPVLGPVRGPFPILV</sequence>